<proteinExistence type="inferred from homology"/>
<protein>
    <recommendedName>
        <fullName>Basic phospholipase A2 beta-bungarotoxin A-AL2 chain</fullName>
        <shortName>Beta-BuTX A-AL2 chain</shortName>
        <shortName>svPLA2</shortName>
        <ecNumber>3.1.1.4</ecNumber>
    </recommendedName>
    <alternativeName>
        <fullName>Phosphatidylcholine 2-acylhydrolase</fullName>
    </alternativeName>
</protein>
<evidence type="ECO:0000250" key="1"/>
<evidence type="ECO:0000250" key="2">
    <source>
        <dbReference type="UniProtKB" id="P00617"/>
    </source>
</evidence>
<evidence type="ECO:0000250" key="3">
    <source>
        <dbReference type="UniProtKB" id="P14418"/>
    </source>
</evidence>
<evidence type="ECO:0000255" key="4">
    <source>
        <dbReference type="PROSITE-ProRule" id="PRU10035"/>
    </source>
</evidence>
<evidence type="ECO:0000255" key="5">
    <source>
        <dbReference type="PROSITE-ProRule" id="PRU10036"/>
    </source>
</evidence>
<evidence type="ECO:0000305" key="6"/>
<evidence type="ECO:0000305" key="7">
    <source>
    </source>
</evidence>
<dbReference type="EC" id="3.1.1.4"/>
<dbReference type="EMBL" id="AJ251220">
    <property type="protein sequence ID" value="CAB62500.1"/>
    <property type="molecule type" value="Genomic_DNA"/>
</dbReference>
<dbReference type="SMR" id="Q9PTA7"/>
<dbReference type="GO" id="GO:0005576">
    <property type="term" value="C:extracellular region"/>
    <property type="evidence" value="ECO:0007669"/>
    <property type="project" value="UniProtKB-SubCell"/>
</dbReference>
<dbReference type="GO" id="GO:0005509">
    <property type="term" value="F:calcium ion binding"/>
    <property type="evidence" value="ECO:0007669"/>
    <property type="project" value="InterPro"/>
</dbReference>
<dbReference type="GO" id="GO:0047498">
    <property type="term" value="F:calcium-dependent phospholipase A2 activity"/>
    <property type="evidence" value="ECO:0007669"/>
    <property type="project" value="TreeGrafter"/>
</dbReference>
<dbReference type="GO" id="GO:0005543">
    <property type="term" value="F:phospholipid binding"/>
    <property type="evidence" value="ECO:0007669"/>
    <property type="project" value="TreeGrafter"/>
</dbReference>
<dbReference type="GO" id="GO:0090729">
    <property type="term" value="F:toxin activity"/>
    <property type="evidence" value="ECO:0007669"/>
    <property type="project" value="UniProtKB-KW"/>
</dbReference>
<dbReference type="GO" id="GO:0050482">
    <property type="term" value="P:arachidonate secretion"/>
    <property type="evidence" value="ECO:0007669"/>
    <property type="project" value="InterPro"/>
</dbReference>
<dbReference type="GO" id="GO:0016042">
    <property type="term" value="P:lipid catabolic process"/>
    <property type="evidence" value="ECO:0007669"/>
    <property type="project" value="UniProtKB-KW"/>
</dbReference>
<dbReference type="GO" id="GO:0006644">
    <property type="term" value="P:phospholipid metabolic process"/>
    <property type="evidence" value="ECO:0007669"/>
    <property type="project" value="InterPro"/>
</dbReference>
<dbReference type="CDD" id="cd00125">
    <property type="entry name" value="PLA2c"/>
    <property type="match status" value="1"/>
</dbReference>
<dbReference type="FunFam" id="1.20.90.10:FF:000007">
    <property type="entry name" value="Acidic phospholipase A2"/>
    <property type="match status" value="1"/>
</dbReference>
<dbReference type="Gene3D" id="1.20.90.10">
    <property type="entry name" value="Phospholipase A2 domain"/>
    <property type="match status" value="1"/>
</dbReference>
<dbReference type="InterPro" id="IPR001211">
    <property type="entry name" value="PLipase_A2"/>
</dbReference>
<dbReference type="InterPro" id="IPR033112">
    <property type="entry name" value="PLipase_A2_Asp_AS"/>
</dbReference>
<dbReference type="InterPro" id="IPR016090">
    <property type="entry name" value="PLipase_A2_dom"/>
</dbReference>
<dbReference type="InterPro" id="IPR036444">
    <property type="entry name" value="PLipase_A2_dom_sf"/>
</dbReference>
<dbReference type="InterPro" id="IPR033113">
    <property type="entry name" value="PLipase_A2_His_AS"/>
</dbReference>
<dbReference type="PANTHER" id="PTHR11716:SF100">
    <property type="entry name" value="PHOSPHOLIPASE A2"/>
    <property type="match status" value="1"/>
</dbReference>
<dbReference type="PANTHER" id="PTHR11716">
    <property type="entry name" value="PHOSPHOLIPASE A2 FAMILY MEMBER"/>
    <property type="match status" value="1"/>
</dbReference>
<dbReference type="Pfam" id="PF00068">
    <property type="entry name" value="Phospholip_A2_1"/>
    <property type="match status" value="1"/>
</dbReference>
<dbReference type="PRINTS" id="PR00389">
    <property type="entry name" value="PHPHLIPASEA2"/>
</dbReference>
<dbReference type="SMART" id="SM00085">
    <property type="entry name" value="PA2c"/>
    <property type="match status" value="1"/>
</dbReference>
<dbReference type="SUPFAM" id="SSF48619">
    <property type="entry name" value="Phospholipase A2, PLA2"/>
    <property type="match status" value="1"/>
</dbReference>
<dbReference type="PROSITE" id="PS00119">
    <property type="entry name" value="PA2_ASP"/>
    <property type="match status" value="1"/>
</dbReference>
<dbReference type="PROSITE" id="PS00118">
    <property type="entry name" value="PA2_HIS"/>
    <property type="match status" value="1"/>
</dbReference>
<sequence length="133" mass="14938">FLLGAANIPPHPLNLINFMEMIRYTIPCEKTWGEYADYGCYCGAGGSGRPIDALDRCCYVHDNCYGDAANIRDCNPKTQSYSYKLTKRTIICYGAAGTCARIVCDCDRTAALCFGNSEYIERHKNIDTKRHCR</sequence>
<keyword id="KW-0106">Calcium</keyword>
<keyword id="KW-1015">Disulfide bond</keyword>
<keyword id="KW-0378">Hydrolase</keyword>
<keyword id="KW-0442">Lipid degradation</keyword>
<keyword id="KW-0443">Lipid metabolism</keyword>
<keyword id="KW-0479">Metal-binding</keyword>
<keyword id="KW-0528">Neurotoxin</keyword>
<keyword id="KW-0638">Presynaptic neurotoxin</keyword>
<keyword id="KW-0964">Secreted</keyword>
<keyword id="KW-0732">Signal</keyword>
<keyword id="KW-0800">Toxin</keyword>
<name>PA2B_BUNMU</name>
<comment type="function">
    <text evidence="1">Snake venom phospholipase A2 (PLA2) that inhibits neuromuscular transmission by blocking acetylcholine release from the nerve termini. PLA2 catalyzes the calcium-dependent hydrolysis of the 2-acyl groups in 3-sn-phosphoglycerides (By similarity).</text>
</comment>
<comment type="catalytic activity">
    <reaction evidence="4 5">
        <text>a 1,2-diacyl-sn-glycero-3-phosphocholine + H2O = a 1-acyl-sn-glycero-3-phosphocholine + a fatty acid + H(+)</text>
        <dbReference type="Rhea" id="RHEA:15801"/>
        <dbReference type="ChEBI" id="CHEBI:15377"/>
        <dbReference type="ChEBI" id="CHEBI:15378"/>
        <dbReference type="ChEBI" id="CHEBI:28868"/>
        <dbReference type="ChEBI" id="CHEBI:57643"/>
        <dbReference type="ChEBI" id="CHEBI:58168"/>
        <dbReference type="EC" id="3.1.1.4"/>
    </reaction>
</comment>
<comment type="cofactor">
    <cofactor evidence="2">
        <name>Ca(2+)</name>
        <dbReference type="ChEBI" id="CHEBI:29108"/>
    </cofactor>
    <text evidence="2">Binds 1 Ca(2+) ion.</text>
</comment>
<comment type="subunit">
    <text evidence="2">Heterodimer; disulfide-linked. The A chains have phospholipase A2 activity and the B chains show homology with the basic protease inhibitors.</text>
</comment>
<comment type="subcellular location">
    <subcellularLocation>
        <location evidence="2">Secreted</location>
    </subcellularLocation>
</comment>
<comment type="tissue specificity">
    <text evidence="2">Expressed by the venom gland.</text>
</comment>
<comment type="similarity">
    <text evidence="6">Belongs to the phospholipase A2 family. Group I subfamily. D49 sub-subfamily.</text>
</comment>
<feature type="signal peptide" evidence="2">
    <location>
        <begin position="1" status="less than"/>
        <end position="5"/>
    </location>
</feature>
<feature type="propeptide" id="PRO_0000462267" evidence="2">
    <location>
        <begin position="6"/>
        <end position="13"/>
    </location>
</feature>
<feature type="chain" id="PRO_0000022847" description="Basic phospholipase A2 beta-bungarotoxin A-AL2 chain" evidence="2">
    <location>
        <begin position="14"/>
        <end position="133"/>
    </location>
</feature>
<feature type="active site" evidence="3">
    <location>
        <position position="61"/>
    </location>
</feature>
<feature type="active site" evidence="3">
    <location>
        <position position="107"/>
    </location>
</feature>
<feature type="binding site" evidence="2">
    <location>
        <position position="41"/>
    </location>
    <ligand>
        <name>Ca(2+)</name>
        <dbReference type="ChEBI" id="CHEBI:29108"/>
    </ligand>
</feature>
<feature type="binding site" evidence="2">
    <location>
        <position position="43"/>
    </location>
    <ligand>
        <name>Ca(2+)</name>
        <dbReference type="ChEBI" id="CHEBI:29108"/>
    </ligand>
</feature>
<feature type="binding site" evidence="2">
    <location>
        <position position="45"/>
    </location>
    <ligand>
        <name>Ca(2+)</name>
        <dbReference type="ChEBI" id="CHEBI:29108"/>
    </ligand>
</feature>
<feature type="binding site" evidence="2">
    <location>
        <position position="62"/>
    </location>
    <ligand>
        <name>Ca(2+)</name>
        <dbReference type="ChEBI" id="CHEBI:29108"/>
    </ligand>
</feature>
<feature type="disulfide bond" description="Interchain (with a B chain)" evidence="2">
    <location>
        <position position="28"/>
    </location>
</feature>
<feature type="disulfide bond" evidence="2">
    <location>
        <begin position="40"/>
        <end position="132"/>
    </location>
</feature>
<feature type="disulfide bond" evidence="2">
    <location>
        <begin position="42"/>
        <end position="58"/>
    </location>
</feature>
<feature type="disulfide bond" evidence="2">
    <location>
        <begin position="57"/>
        <end position="113"/>
    </location>
</feature>
<feature type="disulfide bond" evidence="2">
    <location>
        <begin position="64"/>
        <end position="106"/>
    </location>
</feature>
<feature type="disulfide bond" evidence="2">
    <location>
        <begin position="74"/>
        <end position="99"/>
    </location>
</feature>
<feature type="disulfide bond" evidence="2">
    <location>
        <begin position="92"/>
        <end position="104"/>
    </location>
</feature>
<feature type="non-terminal residue" evidence="7">
    <location>
        <position position="1"/>
    </location>
</feature>
<accession>Q9PTA7</accession>
<organism>
    <name type="scientific">Bungarus multicinctus</name>
    <name type="common">Many-banded krait</name>
    <dbReference type="NCBI Taxonomy" id="8616"/>
    <lineage>
        <taxon>Eukaryota</taxon>
        <taxon>Metazoa</taxon>
        <taxon>Chordata</taxon>
        <taxon>Craniata</taxon>
        <taxon>Vertebrata</taxon>
        <taxon>Euteleostomi</taxon>
        <taxon>Lepidosauria</taxon>
        <taxon>Squamata</taxon>
        <taxon>Bifurcata</taxon>
        <taxon>Unidentata</taxon>
        <taxon>Episquamata</taxon>
        <taxon>Toxicofera</taxon>
        <taxon>Serpentes</taxon>
        <taxon>Colubroidea</taxon>
        <taxon>Elapidae</taxon>
        <taxon>Bungarinae</taxon>
        <taxon>Bungarus</taxon>
    </lineage>
</organism>
<reference key="1">
    <citation type="journal article" date="2000" name="Eur. J. Biochem.">
        <title>Genetic organization of A chain and B chain of beta-bungarotoxin from Taiwan banded krait (Bungarus multicinctus). A chain genes and B chain genes do not share a common origin.</title>
        <authorList>
            <person name="Wu P.-F."/>
            <person name="Chang L.-S."/>
        </authorList>
    </citation>
    <scope>NUCLEOTIDE SEQUENCE [GENOMIC DNA]</scope>
    <source>
        <tissue>Liver</tissue>
    </source>
</reference>
<reference key="2">
    <citation type="journal article" date="2001" name="Toxicon">
        <title>What does beta-bungarotoxin do at the neuromuscular junction?</title>
        <authorList>
            <person name="Rowan E.G."/>
        </authorList>
    </citation>
    <scope>REVIEW</scope>
</reference>